<accession>A1R8U1</accession>
<dbReference type="EMBL" id="CP000474">
    <property type="protein sequence ID" value="ABM07194.1"/>
    <property type="molecule type" value="Genomic_DNA"/>
</dbReference>
<dbReference type="RefSeq" id="WP_011775591.1">
    <property type="nucleotide sequence ID" value="NC_008711.1"/>
</dbReference>
<dbReference type="SMR" id="A1R8U1"/>
<dbReference type="STRING" id="290340.AAur_2944"/>
<dbReference type="GeneID" id="97301788"/>
<dbReference type="KEGG" id="aau:AAur_2944"/>
<dbReference type="eggNOG" id="COG0185">
    <property type="taxonomic scope" value="Bacteria"/>
</dbReference>
<dbReference type="HOGENOM" id="CLU_144911_0_1_11"/>
<dbReference type="OrthoDB" id="9797833at2"/>
<dbReference type="Proteomes" id="UP000000637">
    <property type="component" value="Chromosome"/>
</dbReference>
<dbReference type="GO" id="GO:0005737">
    <property type="term" value="C:cytoplasm"/>
    <property type="evidence" value="ECO:0007669"/>
    <property type="project" value="UniProtKB-ARBA"/>
</dbReference>
<dbReference type="GO" id="GO:0015935">
    <property type="term" value="C:small ribosomal subunit"/>
    <property type="evidence" value="ECO:0007669"/>
    <property type="project" value="InterPro"/>
</dbReference>
<dbReference type="GO" id="GO:0019843">
    <property type="term" value="F:rRNA binding"/>
    <property type="evidence" value="ECO:0007669"/>
    <property type="project" value="UniProtKB-UniRule"/>
</dbReference>
<dbReference type="GO" id="GO:0003735">
    <property type="term" value="F:structural constituent of ribosome"/>
    <property type="evidence" value="ECO:0007669"/>
    <property type="project" value="InterPro"/>
</dbReference>
<dbReference type="GO" id="GO:0000028">
    <property type="term" value="P:ribosomal small subunit assembly"/>
    <property type="evidence" value="ECO:0007669"/>
    <property type="project" value="TreeGrafter"/>
</dbReference>
<dbReference type="GO" id="GO:0006412">
    <property type="term" value="P:translation"/>
    <property type="evidence" value="ECO:0007669"/>
    <property type="project" value="UniProtKB-UniRule"/>
</dbReference>
<dbReference type="FunFam" id="3.30.860.10:FF:000001">
    <property type="entry name" value="30S ribosomal protein S19"/>
    <property type="match status" value="1"/>
</dbReference>
<dbReference type="Gene3D" id="3.30.860.10">
    <property type="entry name" value="30s Ribosomal Protein S19, Chain A"/>
    <property type="match status" value="1"/>
</dbReference>
<dbReference type="HAMAP" id="MF_00531">
    <property type="entry name" value="Ribosomal_uS19"/>
    <property type="match status" value="1"/>
</dbReference>
<dbReference type="InterPro" id="IPR002222">
    <property type="entry name" value="Ribosomal_uS19"/>
</dbReference>
<dbReference type="InterPro" id="IPR005732">
    <property type="entry name" value="Ribosomal_uS19_bac-type"/>
</dbReference>
<dbReference type="InterPro" id="IPR020934">
    <property type="entry name" value="Ribosomal_uS19_CS"/>
</dbReference>
<dbReference type="InterPro" id="IPR023575">
    <property type="entry name" value="Ribosomal_uS19_SF"/>
</dbReference>
<dbReference type="NCBIfam" id="TIGR01050">
    <property type="entry name" value="rpsS_bact"/>
    <property type="match status" value="1"/>
</dbReference>
<dbReference type="PANTHER" id="PTHR11880">
    <property type="entry name" value="RIBOSOMAL PROTEIN S19P FAMILY MEMBER"/>
    <property type="match status" value="1"/>
</dbReference>
<dbReference type="PANTHER" id="PTHR11880:SF8">
    <property type="entry name" value="SMALL RIBOSOMAL SUBUNIT PROTEIN US19M"/>
    <property type="match status" value="1"/>
</dbReference>
<dbReference type="Pfam" id="PF00203">
    <property type="entry name" value="Ribosomal_S19"/>
    <property type="match status" value="1"/>
</dbReference>
<dbReference type="PIRSF" id="PIRSF002144">
    <property type="entry name" value="Ribosomal_S19"/>
    <property type="match status" value="1"/>
</dbReference>
<dbReference type="PRINTS" id="PR00975">
    <property type="entry name" value="RIBOSOMALS19"/>
</dbReference>
<dbReference type="SUPFAM" id="SSF54570">
    <property type="entry name" value="Ribosomal protein S19"/>
    <property type="match status" value="1"/>
</dbReference>
<dbReference type="PROSITE" id="PS00323">
    <property type="entry name" value="RIBOSOMAL_S19"/>
    <property type="match status" value="1"/>
</dbReference>
<reference key="1">
    <citation type="journal article" date="2006" name="PLoS Genet.">
        <title>Secrets of soil survival revealed by the genome sequence of Arthrobacter aurescens TC1.</title>
        <authorList>
            <person name="Mongodin E.F."/>
            <person name="Shapir N."/>
            <person name="Daugherty S.C."/>
            <person name="DeBoy R.T."/>
            <person name="Emerson J.B."/>
            <person name="Shvartzbeyn A."/>
            <person name="Radune D."/>
            <person name="Vamathevan J."/>
            <person name="Riggs F."/>
            <person name="Grinberg V."/>
            <person name="Khouri H.M."/>
            <person name="Wackett L.P."/>
            <person name="Nelson K.E."/>
            <person name="Sadowsky M.J."/>
        </authorList>
    </citation>
    <scope>NUCLEOTIDE SEQUENCE [LARGE SCALE GENOMIC DNA]</scope>
    <source>
        <strain>TC1</strain>
    </source>
</reference>
<proteinExistence type="inferred from homology"/>
<name>RS19_PAEAT</name>
<protein>
    <recommendedName>
        <fullName evidence="1">Small ribosomal subunit protein uS19</fullName>
    </recommendedName>
    <alternativeName>
        <fullName evidence="2">30S ribosomal protein S19</fullName>
    </alternativeName>
</protein>
<gene>
    <name evidence="1" type="primary">rpsS</name>
    <name type="ordered locus">AAur_2944</name>
</gene>
<evidence type="ECO:0000255" key="1">
    <source>
        <dbReference type="HAMAP-Rule" id="MF_00531"/>
    </source>
</evidence>
<evidence type="ECO:0000305" key="2"/>
<comment type="function">
    <text evidence="1">Protein S19 forms a complex with S13 that binds strongly to the 16S ribosomal RNA.</text>
</comment>
<comment type="similarity">
    <text evidence="1">Belongs to the universal ribosomal protein uS19 family.</text>
</comment>
<sequence>MPRSLKKGPFVDQHLFVKVARENDKGTKNVIKTWSRRSMIIPDMLGHTIAVHDGRKHIPVFVTESMVGHKLGEFAPTRTFRGHVKDDRKGKRR</sequence>
<organism>
    <name type="scientific">Paenarthrobacter aurescens (strain TC1)</name>
    <dbReference type="NCBI Taxonomy" id="290340"/>
    <lineage>
        <taxon>Bacteria</taxon>
        <taxon>Bacillati</taxon>
        <taxon>Actinomycetota</taxon>
        <taxon>Actinomycetes</taxon>
        <taxon>Micrococcales</taxon>
        <taxon>Micrococcaceae</taxon>
        <taxon>Paenarthrobacter</taxon>
    </lineage>
</organism>
<feature type="chain" id="PRO_1000051009" description="Small ribosomal subunit protein uS19">
    <location>
        <begin position="1"/>
        <end position="93"/>
    </location>
</feature>
<keyword id="KW-0687">Ribonucleoprotein</keyword>
<keyword id="KW-0689">Ribosomal protein</keyword>
<keyword id="KW-0694">RNA-binding</keyword>
<keyword id="KW-0699">rRNA-binding</keyword>